<dbReference type="EMBL" id="AP009324">
    <property type="protein sequence ID" value="BAF77454.1"/>
    <property type="molecule type" value="Genomic_DNA"/>
</dbReference>
<dbReference type="EMBL" id="AB035449">
    <property type="protein sequence ID" value="BAB03326.2"/>
    <property type="molecule type" value="Genomic_DNA"/>
</dbReference>
<dbReference type="RefSeq" id="WP_000347061.1">
    <property type="nucleotide sequence ID" value="NZ_CTYB01000020.1"/>
</dbReference>
<dbReference type="SMR" id="Q9KWK6"/>
<dbReference type="KEGG" id="saw:SAHV_0571"/>
<dbReference type="HOGENOM" id="CLU_001265_39_5_9"/>
<dbReference type="GO" id="GO:0005886">
    <property type="term" value="C:plasma membrane"/>
    <property type="evidence" value="ECO:0007669"/>
    <property type="project" value="UniProtKB-SubCell"/>
</dbReference>
<dbReference type="GO" id="GO:0015293">
    <property type="term" value="F:symporter activity"/>
    <property type="evidence" value="ECO:0007669"/>
    <property type="project" value="UniProtKB-KW"/>
</dbReference>
<dbReference type="CDD" id="cd17366">
    <property type="entry name" value="MFS_ProP"/>
    <property type="match status" value="1"/>
</dbReference>
<dbReference type="FunFam" id="1.20.1250.20:FF:000001">
    <property type="entry name" value="Dicarboxylate MFS transporter"/>
    <property type="match status" value="1"/>
</dbReference>
<dbReference type="FunFam" id="1.20.1250.20:FF:000236">
    <property type="entry name" value="Proline/betaine transporter, putative"/>
    <property type="match status" value="1"/>
</dbReference>
<dbReference type="Gene3D" id="1.20.1250.20">
    <property type="entry name" value="MFS general substrate transporter like domains"/>
    <property type="match status" value="2"/>
</dbReference>
<dbReference type="InterPro" id="IPR051084">
    <property type="entry name" value="H+-coupled_symporters"/>
</dbReference>
<dbReference type="InterPro" id="IPR011701">
    <property type="entry name" value="MFS"/>
</dbReference>
<dbReference type="InterPro" id="IPR020846">
    <property type="entry name" value="MFS_dom"/>
</dbReference>
<dbReference type="InterPro" id="IPR036259">
    <property type="entry name" value="MFS_trans_sf"/>
</dbReference>
<dbReference type="InterPro" id="IPR005829">
    <property type="entry name" value="Sugar_transporter_CS"/>
</dbReference>
<dbReference type="PANTHER" id="PTHR43528">
    <property type="entry name" value="ALPHA-KETOGLUTARATE PERMEASE"/>
    <property type="match status" value="1"/>
</dbReference>
<dbReference type="PANTHER" id="PTHR43528:SF1">
    <property type="entry name" value="ALPHA-KETOGLUTARATE PERMEASE"/>
    <property type="match status" value="1"/>
</dbReference>
<dbReference type="Pfam" id="PF07690">
    <property type="entry name" value="MFS_1"/>
    <property type="match status" value="1"/>
</dbReference>
<dbReference type="SUPFAM" id="SSF103473">
    <property type="entry name" value="MFS general substrate transporter"/>
    <property type="match status" value="1"/>
</dbReference>
<dbReference type="PROSITE" id="PS50850">
    <property type="entry name" value="MFS"/>
    <property type="match status" value="1"/>
</dbReference>
<dbReference type="PROSITE" id="PS00217">
    <property type="entry name" value="SUGAR_TRANSPORT_2"/>
    <property type="match status" value="1"/>
</dbReference>
<keyword id="KW-1003">Cell membrane</keyword>
<keyword id="KW-0472">Membrane</keyword>
<keyword id="KW-0769">Symport</keyword>
<keyword id="KW-0812">Transmembrane</keyword>
<keyword id="KW-1133">Transmembrane helix</keyword>
<keyword id="KW-0813">Transport</keyword>
<sequence>MDFNKENINMVDAKKAKKTVVATGIGNAMEWFDFGVYAYTTAYIGANFFSPVENADIRQMLTFAALAIAFLLRPIGGVVFGIIGDKYGRKVVLTSTIILMAFSTLTIGLLPSYDQIGLWAPILLLLARVLQGFSTGGEYAGAMTYVAESSPDKRRNSLGSGLEIGTLSGYIAASIMIAVLTFFLTDEQMASFGWRIPFLLGLFLGLFGLYLRRKLEESPVFENDVATQPERDNINFLQIIRFYYKDIFVCFVAVVFFNVTNYMVTAYLPTYLEQVIKLDATTTSVLITCVMAIMIPLALMFGKLADKIGEKKVFLIGTGGLTLFSIIAFMLLHSQSFVVIVIGIFILGFFLSTYEATMPGSLPTMFYSHIRYRTLSVTFNISVSIFGGTTPLVATWLVTKTGDPLAPAYYLTAISVIGFLVITFLHLSTAGKSLKGSYPNVDNEQDRAYYAEHPKEALWWVKERKN</sequence>
<gene>
    <name type="primary">proP</name>
    <name type="ordered locus">SAHV_0571</name>
</gene>
<comment type="function">
    <text evidence="1">May be a proton symporter involved in the uptake of osmolytes such as proline and glycine betaine.</text>
</comment>
<comment type="subcellular location">
    <subcellularLocation>
        <location evidence="3">Cell membrane</location>
        <topology evidence="3">Multi-pass membrane protein</topology>
    </subcellularLocation>
</comment>
<comment type="similarity">
    <text evidence="3">Belongs to the major facilitator superfamily. Metabolite:H+ Symporter (MHS) family (TC 2.A.1.6) family.</text>
</comment>
<reference key="1">
    <citation type="journal article" date="2008" name="Antimicrob. Agents Chemother.">
        <title>Mutated response regulator graR is responsible for phenotypic conversion of Staphylococcus aureus from heterogeneous vancomycin-intermediate resistance to vancomycin-intermediate resistance.</title>
        <authorList>
            <person name="Neoh H.-M."/>
            <person name="Cui L."/>
            <person name="Yuzawa H."/>
            <person name="Takeuchi F."/>
            <person name="Matsuo M."/>
            <person name="Hiramatsu K."/>
        </authorList>
    </citation>
    <scope>NUCLEOTIDE SEQUENCE [LARGE SCALE GENOMIC DNA]</scope>
    <source>
        <strain>Mu3 / ATCC 700698</strain>
    </source>
</reference>
<reference key="2">
    <citation type="journal article" date="2000" name="Biochem. Biophys. Res. Commun.">
        <title>Identification of the up- and down-regulated genes in vancomycin-resistant Staphylococcus aureus strains Mu3 and Mu50 by cDNA differential hybridization method.</title>
        <authorList>
            <person name="Kuroda M."/>
            <person name="Kuwahara-Arai K."/>
            <person name="Hiramatsu K."/>
        </authorList>
    </citation>
    <scope>NUCLEOTIDE SEQUENCE [GENOMIC DNA] OF 214-253</scope>
</reference>
<evidence type="ECO:0000250" key="1"/>
<evidence type="ECO:0000255" key="2"/>
<evidence type="ECO:0000305" key="3"/>
<organism>
    <name type="scientific">Staphylococcus aureus (strain Mu3 / ATCC 700698)</name>
    <dbReference type="NCBI Taxonomy" id="418127"/>
    <lineage>
        <taxon>Bacteria</taxon>
        <taxon>Bacillati</taxon>
        <taxon>Bacillota</taxon>
        <taxon>Bacilli</taxon>
        <taxon>Bacillales</taxon>
        <taxon>Staphylococcaceae</taxon>
        <taxon>Staphylococcus</taxon>
    </lineage>
</organism>
<accession>Q9KWK6</accession>
<accession>A7WZ11</accession>
<protein>
    <recommendedName>
        <fullName>Putative proline/betaine transporter</fullName>
    </recommendedName>
</protein>
<feature type="chain" id="PRO_0000050332" description="Putative proline/betaine transporter">
    <location>
        <begin position="1"/>
        <end position="466"/>
    </location>
</feature>
<feature type="transmembrane region" description="Helical" evidence="2">
    <location>
        <begin position="20"/>
        <end position="42"/>
    </location>
</feature>
<feature type="transmembrane region" description="Helical" evidence="2">
    <location>
        <begin position="63"/>
        <end position="83"/>
    </location>
</feature>
<feature type="transmembrane region" description="Helical" evidence="2">
    <location>
        <begin position="91"/>
        <end position="111"/>
    </location>
</feature>
<feature type="transmembrane region" description="Helical" evidence="2">
    <location>
        <begin position="116"/>
        <end position="136"/>
    </location>
</feature>
<feature type="transmembrane region" description="Helical" evidence="2">
    <location>
        <begin position="164"/>
        <end position="184"/>
    </location>
</feature>
<feature type="transmembrane region" description="Helical" evidence="2">
    <location>
        <begin position="191"/>
        <end position="211"/>
    </location>
</feature>
<feature type="transmembrane region" description="Helical" evidence="2">
    <location>
        <begin position="247"/>
        <end position="267"/>
    </location>
</feature>
<feature type="transmembrane region" description="Helical" evidence="2">
    <location>
        <begin position="285"/>
        <end position="305"/>
    </location>
</feature>
<feature type="transmembrane region" description="Helical" evidence="2">
    <location>
        <begin position="313"/>
        <end position="332"/>
    </location>
</feature>
<feature type="transmembrane region" description="Helical" evidence="2">
    <location>
        <begin position="337"/>
        <end position="354"/>
    </location>
</feature>
<feature type="transmembrane region" description="Helical" evidence="2">
    <location>
        <begin position="377"/>
        <end position="397"/>
    </location>
</feature>
<feature type="transmembrane region" description="Helical" evidence="2">
    <location>
        <begin position="405"/>
        <end position="425"/>
    </location>
</feature>
<name>PROP_STAA1</name>
<proteinExistence type="inferred from homology"/>